<proteinExistence type="evidence at protein level"/>
<sequence>MASPHKPWRAEYAKSSRSSCKTCKSVINKENFRLGKLVQSTHFDGIMPMWNHASCILKKTKQIKSVDDVEGIESLRWEDQQKIRKYVESGAGSNTSTSTGTSTSSTANNAKLEYGIEVSQTSRAGCRKCSEKILKGEVRIFSKPEGPGNKGLMWHHAKCFLEMSSSTELESLSGWRSIPDSDQEALLPLVKKALPAAKTETAEARQTNSRAGTKRKNDSVDNEKSKLAKSSFDMSTSGALQPCSKEKEMEAQTKELWDLKDDLKKYVTSAELREMLEVNEQSTRGSELDLRDKCADGMMFGPLALCPMCSGHLSFSGGLYRCHGYISEWSKCSHSTLDPDRIKGKWKIPDETENQFLLKWNKSQKSVKPKRILRPVLSGETSQGQGSKDATDSSRSERLADLKVSIAGNTKERQPWKKRIEEAGAEFHANVKKGTSCLVVCGLTDIRDAEMRKARRMKVAIVREDYLVDCFKKQRKLPFDKYKIEDTSESLVTVKVKGRSAVHEASGLQEHCHILEDGNSIYNTTLSMSDLSTGINSYYILQIIQEDKGSDCYVFRKWGRVGNEKIGGNKVEEMSKSDAVHEFKRLFLEKTGNTWESWEQKTNFQKQPGKFLPLDIDYGVNKQVAKKEPFQTSSNLAPSLIELMKMLFDVETYRSAMMEFEINMSEMPLGKLSKHNIQKGFEALTEIQRLLTESDPQPTMKESLLVDASNRFFTMIPSIHPHIIRDEDDFKSKVKMLEALQDIEIASRIVGFDVDSTESLDDKYKKLHCDISPLPHDSEDYRLIEKYLNTTHAPTHTEWSLELEEVFALEREGEFDKYAPHREKLGNKMLLWHGSRLTNFVGILNQGLRIAPPEAPATGYMFGKGIYFADLVSKSAQYCYTCKKNPVGLMLLSEVALGEIHELTKAKYMDKPPRGKHSTKGLGKKVPQDSEFAKWRGDVTVPCGKPVSSKVKASELMYNEYIVYDTAQVKLQFLLKVRFKHKR</sequence>
<protein>
    <recommendedName>
        <fullName>Poly [ADP-ribose] polymerase 1</fullName>
        <shortName>PARP-1</shortName>
        <ecNumber evidence="1">2.4.2.30</ecNumber>
    </recommendedName>
    <alternativeName>
        <fullName>NAD(+) ADP-ribosyltransferase 1</fullName>
        <shortName>ADPRT-1</shortName>
    </alternativeName>
    <alternativeName>
        <fullName>Poly[ADP-ribose] synthase 1</fullName>
    </alternativeName>
    <alternativeName>
        <fullName evidence="1">Protein ADP-ribosyltransferase PARP1</fullName>
        <ecNumber evidence="1">2.4.2.-</ecNumber>
    </alternativeName>
</protein>
<comment type="function">
    <text evidence="1">Involved in the base excision repair (BER) pathway, by catalyzing the poly(ADP-ribosyl)ation of a limited number of acceptor proteins involved in chromatin architecture and in DNA metabolism. This modification follows DNA damages and appears as an obligatory step in a detection/signaling pathway leading to the reparation of DNA strand breaks (By similarity).</text>
</comment>
<comment type="catalytic activity">
    <reaction evidence="1">
        <text>NAD(+) + (ADP-D-ribosyl)n-acceptor = nicotinamide + (ADP-D-ribosyl)n+1-acceptor + H(+).</text>
        <dbReference type="EC" id="2.4.2.30"/>
    </reaction>
</comment>
<comment type="catalytic activity">
    <reaction evidence="1">
        <text>L-aspartyl-[protein] + NAD(+) = 4-O-(ADP-D-ribosyl)-L-aspartyl-[protein] + nicotinamide</text>
        <dbReference type="Rhea" id="RHEA:54424"/>
        <dbReference type="Rhea" id="RHEA-COMP:9867"/>
        <dbReference type="Rhea" id="RHEA-COMP:13832"/>
        <dbReference type="ChEBI" id="CHEBI:17154"/>
        <dbReference type="ChEBI" id="CHEBI:29961"/>
        <dbReference type="ChEBI" id="CHEBI:57540"/>
        <dbReference type="ChEBI" id="CHEBI:138102"/>
    </reaction>
</comment>
<comment type="catalytic activity">
    <reaction evidence="1">
        <text>L-glutamyl-[protein] + NAD(+) = 5-O-(ADP-D-ribosyl)-L-glutamyl-[protein] + nicotinamide</text>
        <dbReference type="Rhea" id="RHEA:58224"/>
        <dbReference type="Rhea" id="RHEA-COMP:10208"/>
        <dbReference type="Rhea" id="RHEA-COMP:15089"/>
        <dbReference type="ChEBI" id="CHEBI:17154"/>
        <dbReference type="ChEBI" id="CHEBI:29973"/>
        <dbReference type="ChEBI" id="CHEBI:57540"/>
        <dbReference type="ChEBI" id="CHEBI:142540"/>
    </reaction>
</comment>
<comment type="subcellular location">
    <subcellularLocation>
        <location evidence="3">Nucleus</location>
    </subcellularLocation>
</comment>
<comment type="induction">
    <text evidence="9">By ionising radiation (IR)-induced DNA damage.</text>
</comment>
<comment type="similarity">
    <text evidence="7 10">Belongs to the ARTD/PARP family.</text>
</comment>
<comment type="sequence caution" evidence="10">
    <conflict type="erroneous gene model prediction">
        <sequence resource="EMBL-CDS" id="AAD20677"/>
    </conflict>
</comment>
<gene>
    <name type="primary">PARP1</name>
    <name type="ordered locus">At2g31320</name>
    <name type="ORF">F16D14.16</name>
</gene>
<accession>Q9ZP54</accession>
<accession>Q9SJW4</accession>
<reference key="1">
    <citation type="journal article" date="2001" name="Mol. Genet. Genomics">
        <title>Ionising radiation induces the expression of PARP-1 and PARP-2 genes in Arabidopsis.</title>
        <authorList>
            <person name="Doucet-Chabeaud G."/>
            <person name="Godon C."/>
            <person name="Brutesco C."/>
            <person name="de Murcia G."/>
            <person name="Kazmaier M."/>
        </authorList>
    </citation>
    <scope>NUCLEOTIDE SEQUENCE [MRNA]</scope>
    <scope>INDUCTION</scope>
    <source>
        <strain>cv. Landsberg erecta</strain>
    </source>
</reference>
<reference key="2">
    <citation type="journal article" date="1999" name="Nature">
        <title>Sequence and analysis of chromosome 2 of the plant Arabidopsis thaliana.</title>
        <authorList>
            <person name="Lin X."/>
            <person name="Kaul S."/>
            <person name="Rounsley S.D."/>
            <person name="Shea T.P."/>
            <person name="Benito M.-I."/>
            <person name="Town C.D."/>
            <person name="Fujii C.Y."/>
            <person name="Mason T.M."/>
            <person name="Bowman C.L."/>
            <person name="Barnstead M.E."/>
            <person name="Feldblyum T.V."/>
            <person name="Buell C.R."/>
            <person name="Ketchum K.A."/>
            <person name="Lee J.J."/>
            <person name="Ronning C.M."/>
            <person name="Koo H.L."/>
            <person name="Moffat K.S."/>
            <person name="Cronin L.A."/>
            <person name="Shen M."/>
            <person name="Pai G."/>
            <person name="Van Aken S."/>
            <person name="Umayam L."/>
            <person name="Tallon L.J."/>
            <person name="Gill J.E."/>
            <person name="Adams M.D."/>
            <person name="Carrera A.J."/>
            <person name="Creasy T.H."/>
            <person name="Goodman H.M."/>
            <person name="Somerville C.R."/>
            <person name="Copenhaver G.P."/>
            <person name="Preuss D."/>
            <person name="Nierman W.C."/>
            <person name="White O."/>
            <person name="Eisen J.A."/>
            <person name="Salzberg S.L."/>
            <person name="Fraser C.M."/>
            <person name="Venter J.C."/>
        </authorList>
    </citation>
    <scope>NUCLEOTIDE SEQUENCE [LARGE SCALE GENOMIC DNA]</scope>
    <source>
        <strain>cv. Columbia</strain>
    </source>
</reference>
<reference key="3">
    <citation type="journal article" date="2017" name="Plant J.">
        <title>Araport11: a complete reannotation of the Arabidopsis thaliana reference genome.</title>
        <authorList>
            <person name="Cheng C.Y."/>
            <person name="Krishnakumar V."/>
            <person name="Chan A.P."/>
            <person name="Thibaud-Nissen F."/>
            <person name="Schobel S."/>
            <person name="Town C.D."/>
        </authorList>
    </citation>
    <scope>GENOME REANNOTATION</scope>
    <source>
        <strain>cv. Columbia</strain>
    </source>
</reference>
<reference key="4">
    <citation type="journal article" date="2003" name="Science">
        <title>Empirical analysis of transcriptional activity in the Arabidopsis genome.</title>
        <authorList>
            <person name="Yamada K."/>
            <person name="Lim J."/>
            <person name="Dale J.M."/>
            <person name="Chen H."/>
            <person name="Shinn P."/>
            <person name="Palm C.J."/>
            <person name="Southwick A.M."/>
            <person name="Wu H.C."/>
            <person name="Kim C.J."/>
            <person name="Nguyen M."/>
            <person name="Pham P.K."/>
            <person name="Cheuk R.F."/>
            <person name="Karlin-Newmann G."/>
            <person name="Liu S.X."/>
            <person name="Lam B."/>
            <person name="Sakano H."/>
            <person name="Wu T."/>
            <person name="Yu G."/>
            <person name="Miranda M."/>
            <person name="Quach H.L."/>
            <person name="Tripp M."/>
            <person name="Chang C.H."/>
            <person name="Lee J.M."/>
            <person name="Toriumi M.J."/>
            <person name="Chan M.M."/>
            <person name="Tang C.C."/>
            <person name="Onodera C.S."/>
            <person name="Deng J.M."/>
            <person name="Akiyama K."/>
            <person name="Ansari Y."/>
            <person name="Arakawa T."/>
            <person name="Banh J."/>
            <person name="Banno F."/>
            <person name="Bowser L."/>
            <person name="Brooks S.Y."/>
            <person name="Carninci P."/>
            <person name="Chao Q."/>
            <person name="Choy N."/>
            <person name="Enju A."/>
            <person name="Goldsmith A.D."/>
            <person name="Gurjal M."/>
            <person name="Hansen N.F."/>
            <person name="Hayashizaki Y."/>
            <person name="Johnson-Hopson C."/>
            <person name="Hsuan V.W."/>
            <person name="Iida K."/>
            <person name="Karnes M."/>
            <person name="Khan S."/>
            <person name="Koesema E."/>
            <person name="Ishida J."/>
            <person name="Jiang P.X."/>
            <person name="Jones T."/>
            <person name="Kawai J."/>
            <person name="Kamiya A."/>
            <person name="Meyers C."/>
            <person name="Nakajima M."/>
            <person name="Narusaka M."/>
            <person name="Seki M."/>
            <person name="Sakurai T."/>
            <person name="Satou M."/>
            <person name="Tamse R."/>
            <person name="Vaysberg M."/>
            <person name="Wallender E.K."/>
            <person name="Wong C."/>
            <person name="Yamamura Y."/>
            <person name="Yuan S."/>
            <person name="Shinozaki K."/>
            <person name="Davis R.W."/>
            <person name="Theologis A."/>
            <person name="Ecker J.R."/>
        </authorList>
    </citation>
    <scope>NUCLEOTIDE SEQUENCE [LARGE SCALE MRNA]</scope>
    <source>
        <strain>cv. Columbia</strain>
    </source>
</reference>
<reference key="5">
    <citation type="submission" date="2005-02" db="PDB data bank">
        <title>Solution structure of the first Zn-finger domain of poly(ADP-ribose) polymerase-1.</title>
        <authorList>
            <consortium name="RIKEN structural genomics initiative (RSGI)"/>
        </authorList>
    </citation>
    <scope>STRUCTURE BY NMR OF 5-105</scope>
</reference>
<feature type="chain" id="PRO_0000211331" description="Poly [ADP-ribose] polymerase 1">
    <location>
        <begin position="1"/>
        <end position="983"/>
    </location>
</feature>
<feature type="domain" description="PADR1 zinc-binding" evidence="7">
    <location>
        <begin position="236"/>
        <end position="375"/>
    </location>
</feature>
<feature type="domain" description="BRCT" evidence="2">
    <location>
        <begin position="394"/>
        <end position="484"/>
    </location>
</feature>
<feature type="domain" description="WGR" evidence="6">
    <location>
        <begin position="511"/>
        <end position="611"/>
    </location>
</feature>
<feature type="domain" description="PARP alpha-helical" evidence="5">
    <location>
        <begin position="633"/>
        <end position="751"/>
    </location>
</feature>
<feature type="domain" description="PARP catalytic" evidence="4">
    <location>
        <begin position="758"/>
        <end position="983"/>
    </location>
</feature>
<feature type="zinc finger region" description="PARP-type 1" evidence="3">
    <location>
        <begin position="8"/>
        <end position="91"/>
    </location>
</feature>
<feature type="zinc finger region" description="PARP-type 2" evidence="3">
    <location>
        <begin position="114"/>
        <end position="194"/>
    </location>
</feature>
<feature type="region of interest" description="Disordered" evidence="8">
    <location>
        <begin position="197"/>
        <end position="246"/>
    </location>
</feature>
<feature type="region of interest" description="Zinc ribbon" evidence="7">
    <location>
        <begin position="301"/>
        <end position="345"/>
    </location>
</feature>
<feature type="region of interest" description="Disordered" evidence="8">
    <location>
        <begin position="369"/>
        <end position="397"/>
    </location>
</feature>
<feature type="compositionally biased region" description="Basic and acidic residues" evidence="8">
    <location>
        <begin position="215"/>
        <end position="226"/>
    </location>
</feature>
<feature type="compositionally biased region" description="Polar residues" evidence="8">
    <location>
        <begin position="379"/>
        <end position="388"/>
    </location>
</feature>
<feature type="binding site" evidence="3">
    <location>
        <position position="20"/>
    </location>
    <ligand>
        <name>Zn(2+)</name>
        <dbReference type="ChEBI" id="CHEBI:29105"/>
        <label>1</label>
    </ligand>
</feature>
<feature type="binding site" evidence="3">
    <location>
        <position position="23"/>
    </location>
    <ligand>
        <name>Zn(2+)</name>
        <dbReference type="ChEBI" id="CHEBI:29105"/>
        <label>1</label>
    </ligand>
</feature>
<feature type="binding site" evidence="3">
    <location>
        <position position="52"/>
    </location>
    <ligand>
        <name>Zn(2+)</name>
        <dbReference type="ChEBI" id="CHEBI:29105"/>
        <label>1</label>
    </ligand>
</feature>
<feature type="binding site" evidence="3">
    <location>
        <position position="55"/>
    </location>
    <ligand>
        <name>Zn(2+)</name>
        <dbReference type="ChEBI" id="CHEBI:29105"/>
        <label>1</label>
    </ligand>
</feature>
<feature type="binding site" evidence="3">
    <location>
        <position position="126"/>
    </location>
    <ligand>
        <name>Zn(2+)</name>
        <dbReference type="ChEBI" id="CHEBI:29105"/>
        <label>2</label>
    </ligand>
</feature>
<feature type="binding site" evidence="3">
    <location>
        <position position="129"/>
    </location>
    <ligand>
        <name>Zn(2+)</name>
        <dbReference type="ChEBI" id="CHEBI:29105"/>
        <label>2</label>
    </ligand>
</feature>
<feature type="binding site" evidence="3">
    <location>
        <position position="156"/>
    </location>
    <ligand>
        <name>Zn(2+)</name>
        <dbReference type="ChEBI" id="CHEBI:29105"/>
        <label>2</label>
    </ligand>
</feature>
<feature type="binding site" evidence="3">
    <location>
        <position position="159"/>
    </location>
    <ligand>
        <name>Zn(2+)</name>
        <dbReference type="ChEBI" id="CHEBI:29105"/>
        <label>2</label>
    </ligand>
</feature>
<feature type="binding site" evidence="7">
    <location>
        <position position="306"/>
    </location>
    <ligand>
        <name>Zn(2+)</name>
        <dbReference type="ChEBI" id="CHEBI:29105"/>
        <label>3</label>
    </ligand>
</feature>
<feature type="binding site" evidence="7">
    <location>
        <position position="309"/>
    </location>
    <ligand>
        <name>Zn(2+)</name>
        <dbReference type="ChEBI" id="CHEBI:29105"/>
        <label>3</label>
    </ligand>
</feature>
<feature type="binding site" evidence="7">
    <location>
        <position position="322"/>
    </location>
    <ligand>
        <name>Zn(2+)</name>
        <dbReference type="ChEBI" id="CHEBI:29105"/>
        <label>3</label>
    </ligand>
</feature>
<feature type="binding site" evidence="7">
    <location>
        <position position="332"/>
    </location>
    <ligand>
        <name>Zn(2+)</name>
        <dbReference type="ChEBI" id="CHEBI:29105"/>
        <label>3</label>
    </ligand>
</feature>
<feature type="strand" evidence="11">
    <location>
        <begin position="7"/>
        <end position="12"/>
    </location>
</feature>
<feature type="strand" evidence="11">
    <location>
        <begin position="21"/>
        <end position="23"/>
    </location>
</feature>
<feature type="strand" evidence="11">
    <location>
        <begin position="29"/>
        <end position="36"/>
    </location>
</feature>
<feature type="strand" evidence="11">
    <location>
        <begin position="41"/>
        <end position="44"/>
    </location>
</feature>
<feature type="strand" evidence="11">
    <location>
        <begin position="49"/>
        <end position="52"/>
    </location>
</feature>
<feature type="helix" evidence="11">
    <location>
        <begin position="53"/>
        <end position="57"/>
    </location>
</feature>
<feature type="strand" evidence="11">
    <location>
        <begin position="59"/>
        <end position="61"/>
    </location>
</feature>
<feature type="helix" evidence="11">
    <location>
        <begin position="66"/>
        <end position="68"/>
    </location>
</feature>
<feature type="turn" evidence="11">
    <location>
        <begin position="71"/>
        <end position="74"/>
    </location>
</feature>
<feature type="helix" evidence="11">
    <location>
        <begin position="77"/>
        <end position="87"/>
    </location>
</feature>
<feature type="strand" evidence="11">
    <location>
        <begin position="91"/>
        <end position="93"/>
    </location>
</feature>
<dbReference type="EC" id="2.4.2.30" evidence="1"/>
<dbReference type="EC" id="2.4.2.-" evidence="1"/>
<dbReference type="EMBL" id="AJ131705">
    <property type="protein sequence ID" value="CAA10482.1"/>
    <property type="molecule type" value="mRNA"/>
</dbReference>
<dbReference type="EMBL" id="AC006593">
    <property type="protein sequence ID" value="AAD20677.1"/>
    <property type="status" value="ALT_SEQ"/>
    <property type="molecule type" value="Genomic_DNA"/>
</dbReference>
<dbReference type="EMBL" id="CP002685">
    <property type="protein sequence ID" value="AEC08527.1"/>
    <property type="molecule type" value="Genomic_DNA"/>
</dbReference>
<dbReference type="EMBL" id="AY091061">
    <property type="protein sequence ID" value="AAM13882.1"/>
    <property type="molecule type" value="mRNA"/>
</dbReference>
<dbReference type="EMBL" id="AY150460">
    <property type="protein sequence ID" value="AAN12901.1"/>
    <property type="molecule type" value="mRNA"/>
</dbReference>
<dbReference type="PIR" id="C84719">
    <property type="entry name" value="C84719"/>
</dbReference>
<dbReference type="PIR" id="T51353">
    <property type="entry name" value="T51353"/>
</dbReference>
<dbReference type="RefSeq" id="NP_850165.1">
    <property type="nucleotide sequence ID" value="NM_179834.2"/>
</dbReference>
<dbReference type="PDB" id="1V9X">
    <property type="method" value="NMR"/>
    <property type="chains" value="A=5-105"/>
</dbReference>
<dbReference type="PDBsum" id="1V9X"/>
<dbReference type="SMR" id="Q9ZP54"/>
<dbReference type="BioGRID" id="3038">
    <property type="interactions" value="6"/>
</dbReference>
<dbReference type="FunCoup" id="Q9ZP54">
    <property type="interactions" value="2228"/>
</dbReference>
<dbReference type="STRING" id="3702.Q9ZP54"/>
<dbReference type="iPTMnet" id="Q9ZP54"/>
<dbReference type="PaxDb" id="3702-AT2G31320.1"/>
<dbReference type="ProteomicsDB" id="236282"/>
<dbReference type="EnsemblPlants" id="AT2G31320.1">
    <property type="protein sequence ID" value="AT2G31320.1"/>
    <property type="gene ID" value="AT2G31320"/>
</dbReference>
<dbReference type="GeneID" id="817690"/>
<dbReference type="Gramene" id="AT2G31320.1">
    <property type="protein sequence ID" value="AT2G31320.1"/>
    <property type="gene ID" value="AT2G31320"/>
</dbReference>
<dbReference type="KEGG" id="ath:AT2G31320"/>
<dbReference type="Araport" id="AT2G31320"/>
<dbReference type="TAIR" id="AT2G31320">
    <property type="gene designation" value="PARP1"/>
</dbReference>
<dbReference type="eggNOG" id="KOG1037">
    <property type="taxonomic scope" value="Eukaryota"/>
</dbReference>
<dbReference type="HOGENOM" id="CLU_004841_0_1_1"/>
<dbReference type="InParanoid" id="Q9ZP54"/>
<dbReference type="OMA" id="MNFKYKY"/>
<dbReference type="PhylomeDB" id="Q9ZP54"/>
<dbReference type="EvolutionaryTrace" id="Q9ZP54"/>
<dbReference type="PRO" id="PR:Q9ZP54"/>
<dbReference type="Proteomes" id="UP000006548">
    <property type="component" value="Chromosome 2"/>
</dbReference>
<dbReference type="ExpressionAtlas" id="Q9ZP54">
    <property type="expression patterns" value="baseline and differential"/>
</dbReference>
<dbReference type="GO" id="GO:0005634">
    <property type="term" value="C:nucleus"/>
    <property type="evidence" value="ECO:0007669"/>
    <property type="project" value="UniProtKB-SubCell"/>
</dbReference>
<dbReference type="GO" id="GO:0003677">
    <property type="term" value="F:DNA binding"/>
    <property type="evidence" value="ECO:0007669"/>
    <property type="project" value="UniProtKB-KW"/>
</dbReference>
<dbReference type="GO" id="GO:0051287">
    <property type="term" value="F:NAD binding"/>
    <property type="evidence" value="ECO:0007669"/>
    <property type="project" value="InterPro"/>
</dbReference>
<dbReference type="GO" id="GO:0003950">
    <property type="term" value="F:NAD+ poly-ADP-ribosyltransferase activity"/>
    <property type="evidence" value="ECO:0000314"/>
    <property type="project" value="TAIR"/>
</dbReference>
<dbReference type="GO" id="GO:0140806">
    <property type="term" value="F:NAD+-protein-aspartate ADP-ribosyltransferase activity"/>
    <property type="evidence" value="ECO:0007669"/>
    <property type="project" value="RHEA"/>
</dbReference>
<dbReference type="GO" id="GO:0140807">
    <property type="term" value="F:NAD+-protein-glutamate ADP-ribosyltransferase activity"/>
    <property type="evidence" value="ECO:0007669"/>
    <property type="project" value="RHEA"/>
</dbReference>
<dbReference type="GO" id="GO:0016779">
    <property type="term" value="F:nucleotidyltransferase activity"/>
    <property type="evidence" value="ECO:0007669"/>
    <property type="project" value="UniProtKB-KW"/>
</dbReference>
<dbReference type="GO" id="GO:0008270">
    <property type="term" value="F:zinc ion binding"/>
    <property type="evidence" value="ECO:0007669"/>
    <property type="project" value="UniProtKB-KW"/>
</dbReference>
<dbReference type="GO" id="GO:0030592">
    <property type="term" value="P:DNA ADP-ribosylation"/>
    <property type="evidence" value="ECO:0000314"/>
    <property type="project" value="TAIR"/>
</dbReference>
<dbReference type="GO" id="GO:0006281">
    <property type="term" value="P:DNA repair"/>
    <property type="evidence" value="ECO:0000270"/>
    <property type="project" value="TAIR"/>
</dbReference>
<dbReference type="GO" id="GO:0070212">
    <property type="term" value="P:protein poly-ADP-ribosylation"/>
    <property type="evidence" value="ECO:0000314"/>
    <property type="project" value="TAIR"/>
</dbReference>
<dbReference type="GO" id="GO:0009737">
    <property type="term" value="P:response to abscisic acid"/>
    <property type="evidence" value="ECO:0000270"/>
    <property type="project" value="TAIR"/>
</dbReference>
<dbReference type="GO" id="GO:0006979">
    <property type="term" value="P:response to oxidative stress"/>
    <property type="evidence" value="ECO:0000270"/>
    <property type="project" value="TAIR"/>
</dbReference>
<dbReference type="CDD" id="cd01437">
    <property type="entry name" value="parp_like"/>
    <property type="match status" value="1"/>
</dbReference>
<dbReference type="CDD" id="cd08001">
    <property type="entry name" value="WGR_PARP1_like"/>
    <property type="match status" value="1"/>
</dbReference>
<dbReference type="FunFam" id="1.10.20.130:FF:000001">
    <property type="entry name" value="Poly [ADP-ribose] polymerase"/>
    <property type="match status" value="1"/>
</dbReference>
<dbReference type="FunFam" id="1.20.142.10:FF:000002">
    <property type="entry name" value="Poly [ADP-ribose] polymerase"/>
    <property type="match status" value="1"/>
</dbReference>
<dbReference type="FunFam" id="2.20.25.630:FF:000001">
    <property type="entry name" value="Poly [ADP-ribose] polymerase"/>
    <property type="match status" value="1"/>
</dbReference>
<dbReference type="FunFam" id="3.30.1740.10:FF:000004">
    <property type="entry name" value="Poly [ADP-ribose] polymerase"/>
    <property type="match status" value="1"/>
</dbReference>
<dbReference type="FunFam" id="3.30.1740.10:FF:000005">
    <property type="entry name" value="Poly [ADP-ribose] polymerase"/>
    <property type="match status" value="1"/>
</dbReference>
<dbReference type="FunFam" id="3.40.50.10190:FF:000051">
    <property type="entry name" value="Poly [ADP-ribose] polymerase"/>
    <property type="match status" value="1"/>
</dbReference>
<dbReference type="FunFam" id="3.90.228.10:FF:000002">
    <property type="entry name" value="Poly [ADP-ribose] polymerase"/>
    <property type="match status" value="1"/>
</dbReference>
<dbReference type="Gene3D" id="1.10.20.130">
    <property type="match status" value="1"/>
</dbReference>
<dbReference type="Gene3D" id="2.20.25.630">
    <property type="match status" value="1"/>
</dbReference>
<dbReference type="Gene3D" id="3.90.228.10">
    <property type="match status" value="1"/>
</dbReference>
<dbReference type="Gene3D" id="3.40.50.10190">
    <property type="entry name" value="BRCT domain"/>
    <property type="match status" value="1"/>
</dbReference>
<dbReference type="Gene3D" id="1.20.142.10">
    <property type="entry name" value="Poly(ADP-ribose) polymerase, regulatory domain"/>
    <property type="match status" value="1"/>
</dbReference>
<dbReference type="Gene3D" id="3.30.1740.10">
    <property type="entry name" value="Zinc finger, PARP-type"/>
    <property type="match status" value="2"/>
</dbReference>
<dbReference type="InterPro" id="IPR050800">
    <property type="entry name" value="ARTD/PARP"/>
</dbReference>
<dbReference type="InterPro" id="IPR001357">
    <property type="entry name" value="BRCT_dom"/>
</dbReference>
<dbReference type="InterPro" id="IPR036420">
    <property type="entry name" value="BRCT_dom_sf"/>
</dbReference>
<dbReference type="InterPro" id="IPR038650">
    <property type="entry name" value="PADR1_C_dom_sf"/>
</dbReference>
<dbReference type="InterPro" id="IPR008288">
    <property type="entry name" value="PARP"/>
</dbReference>
<dbReference type="InterPro" id="IPR049296">
    <property type="entry name" value="PARP1-like_PADR1_N"/>
</dbReference>
<dbReference type="InterPro" id="IPR012982">
    <property type="entry name" value="PARP1-like_PADR1_Zn_ribbon"/>
</dbReference>
<dbReference type="InterPro" id="IPR012317">
    <property type="entry name" value="Poly(ADP-ribose)pol_cat_dom"/>
</dbReference>
<dbReference type="InterPro" id="IPR004102">
    <property type="entry name" value="Poly(ADP-ribose)pol_reg_dom"/>
</dbReference>
<dbReference type="InterPro" id="IPR036616">
    <property type="entry name" value="Poly(ADP-ribose)pol_reg_dom_sf"/>
</dbReference>
<dbReference type="InterPro" id="IPR036930">
    <property type="entry name" value="WGR_dom_sf"/>
</dbReference>
<dbReference type="InterPro" id="IPR008893">
    <property type="entry name" value="WGR_domain"/>
</dbReference>
<dbReference type="InterPro" id="IPR001510">
    <property type="entry name" value="Znf_PARP"/>
</dbReference>
<dbReference type="InterPro" id="IPR036957">
    <property type="entry name" value="Znf_PARP_sf"/>
</dbReference>
<dbReference type="PANTHER" id="PTHR10459">
    <property type="entry name" value="DNA LIGASE"/>
    <property type="match status" value="1"/>
</dbReference>
<dbReference type="PANTHER" id="PTHR10459:SF80">
    <property type="entry name" value="POLY [ADP-RIBOSE] POLYMERASE 1"/>
    <property type="match status" value="1"/>
</dbReference>
<dbReference type="Pfam" id="PF00533">
    <property type="entry name" value="BRCT"/>
    <property type="match status" value="1"/>
</dbReference>
<dbReference type="Pfam" id="PF21728">
    <property type="entry name" value="PADR1_N"/>
    <property type="match status" value="1"/>
</dbReference>
<dbReference type="Pfam" id="PF00644">
    <property type="entry name" value="PARP"/>
    <property type="match status" value="1"/>
</dbReference>
<dbReference type="Pfam" id="PF02877">
    <property type="entry name" value="PARP_reg"/>
    <property type="match status" value="1"/>
</dbReference>
<dbReference type="Pfam" id="PF05406">
    <property type="entry name" value="WGR"/>
    <property type="match status" value="1"/>
</dbReference>
<dbReference type="Pfam" id="PF00645">
    <property type="entry name" value="zf-PARP"/>
    <property type="match status" value="2"/>
</dbReference>
<dbReference type="Pfam" id="PF08063">
    <property type="entry name" value="Zn_ribbon_PADR1"/>
    <property type="match status" value="1"/>
</dbReference>
<dbReference type="PIRSF" id="PIRSF000489">
    <property type="entry name" value="NAD_ADPRT"/>
    <property type="match status" value="1"/>
</dbReference>
<dbReference type="SMART" id="SM00292">
    <property type="entry name" value="BRCT"/>
    <property type="match status" value="1"/>
</dbReference>
<dbReference type="SMART" id="SM01335">
    <property type="entry name" value="PADR1"/>
    <property type="match status" value="1"/>
</dbReference>
<dbReference type="SMART" id="SM00773">
    <property type="entry name" value="WGR"/>
    <property type="match status" value="1"/>
</dbReference>
<dbReference type="SMART" id="SM01336">
    <property type="entry name" value="zf-PARP"/>
    <property type="match status" value="2"/>
</dbReference>
<dbReference type="SUPFAM" id="SSF56399">
    <property type="entry name" value="ADP-ribosylation"/>
    <property type="match status" value="1"/>
</dbReference>
<dbReference type="SUPFAM" id="SSF52113">
    <property type="entry name" value="BRCT domain"/>
    <property type="match status" value="1"/>
</dbReference>
<dbReference type="SUPFAM" id="SSF47587">
    <property type="entry name" value="Domain of poly(ADP-ribose) polymerase"/>
    <property type="match status" value="1"/>
</dbReference>
<dbReference type="SUPFAM" id="SSF57716">
    <property type="entry name" value="Glucocorticoid receptor-like (DNA-binding domain)"/>
    <property type="match status" value="2"/>
</dbReference>
<dbReference type="SUPFAM" id="SSF142921">
    <property type="entry name" value="WGR domain-like"/>
    <property type="match status" value="1"/>
</dbReference>
<dbReference type="PROSITE" id="PS50172">
    <property type="entry name" value="BRCT"/>
    <property type="match status" value="1"/>
</dbReference>
<dbReference type="PROSITE" id="PS52007">
    <property type="entry name" value="PADR1"/>
    <property type="match status" value="1"/>
</dbReference>
<dbReference type="PROSITE" id="PS51060">
    <property type="entry name" value="PARP_ALPHA_HD"/>
    <property type="match status" value="1"/>
</dbReference>
<dbReference type="PROSITE" id="PS51059">
    <property type="entry name" value="PARP_CATALYTIC"/>
    <property type="match status" value="1"/>
</dbReference>
<dbReference type="PROSITE" id="PS51977">
    <property type="entry name" value="WGR"/>
    <property type="match status" value="1"/>
</dbReference>
<dbReference type="PROSITE" id="PS50064">
    <property type="entry name" value="ZF_PARP_2"/>
    <property type="match status" value="2"/>
</dbReference>
<organism>
    <name type="scientific">Arabidopsis thaliana</name>
    <name type="common">Mouse-ear cress</name>
    <dbReference type="NCBI Taxonomy" id="3702"/>
    <lineage>
        <taxon>Eukaryota</taxon>
        <taxon>Viridiplantae</taxon>
        <taxon>Streptophyta</taxon>
        <taxon>Embryophyta</taxon>
        <taxon>Tracheophyta</taxon>
        <taxon>Spermatophyta</taxon>
        <taxon>Magnoliopsida</taxon>
        <taxon>eudicotyledons</taxon>
        <taxon>Gunneridae</taxon>
        <taxon>Pentapetalae</taxon>
        <taxon>rosids</taxon>
        <taxon>malvids</taxon>
        <taxon>Brassicales</taxon>
        <taxon>Brassicaceae</taxon>
        <taxon>Camelineae</taxon>
        <taxon>Arabidopsis</taxon>
    </lineage>
</organism>
<keyword id="KW-0002">3D-structure</keyword>
<keyword id="KW-0013">ADP-ribosylation</keyword>
<keyword id="KW-0238">DNA-binding</keyword>
<keyword id="KW-0328">Glycosyltransferase</keyword>
<keyword id="KW-0479">Metal-binding</keyword>
<keyword id="KW-0520">NAD</keyword>
<keyword id="KW-0548">Nucleotidyltransferase</keyword>
<keyword id="KW-0539">Nucleus</keyword>
<keyword id="KW-1185">Reference proteome</keyword>
<keyword id="KW-0677">Repeat</keyword>
<keyword id="KW-0808">Transferase</keyword>
<keyword id="KW-0862">Zinc</keyword>
<keyword id="KW-0863">Zinc-finger</keyword>
<evidence type="ECO:0000250" key="1">
    <source>
        <dbReference type="UniProtKB" id="P09874"/>
    </source>
</evidence>
<evidence type="ECO:0000255" key="2">
    <source>
        <dbReference type="PROSITE-ProRule" id="PRU00033"/>
    </source>
</evidence>
<evidence type="ECO:0000255" key="3">
    <source>
        <dbReference type="PROSITE-ProRule" id="PRU00264"/>
    </source>
</evidence>
<evidence type="ECO:0000255" key="4">
    <source>
        <dbReference type="PROSITE-ProRule" id="PRU00397"/>
    </source>
</evidence>
<evidence type="ECO:0000255" key="5">
    <source>
        <dbReference type="PROSITE-ProRule" id="PRU00398"/>
    </source>
</evidence>
<evidence type="ECO:0000255" key="6">
    <source>
        <dbReference type="PROSITE-ProRule" id="PRU01321"/>
    </source>
</evidence>
<evidence type="ECO:0000255" key="7">
    <source>
        <dbReference type="PROSITE-ProRule" id="PRU01351"/>
    </source>
</evidence>
<evidence type="ECO:0000256" key="8">
    <source>
        <dbReference type="SAM" id="MobiDB-lite"/>
    </source>
</evidence>
<evidence type="ECO:0000269" key="9">
    <source>
    </source>
</evidence>
<evidence type="ECO:0000305" key="10"/>
<evidence type="ECO:0007829" key="11">
    <source>
        <dbReference type="PDB" id="1V9X"/>
    </source>
</evidence>
<name>PARP1_ARATH</name>